<name>RSMA_SYNPW</name>
<dbReference type="EC" id="2.1.1.182" evidence="1"/>
<dbReference type="EMBL" id="CT971583">
    <property type="protein sequence ID" value="CAK23792.1"/>
    <property type="molecule type" value="Genomic_DNA"/>
</dbReference>
<dbReference type="SMR" id="A5GLH7"/>
<dbReference type="STRING" id="32051.SynWH7803_1366"/>
<dbReference type="KEGG" id="syx:SynWH7803_1366"/>
<dbReference type="eggNOG" id="COG0030">
    <property type="taxonomic scope" value="Bacteria"/>
</dbReference>
<dbReference type="HOGENOM" id="CLU_041220_0_1_3"/>
<dbReference type="OrthoDB" id="9814755at2"/>
<dbReference type="Proteomes" id="UP000001566">
    <property type="component" value="Chromosome"/>
</dbReference>
<dbReference type="GO" id="GO:0005829">
    <property type="term" value="C:cytosol"/>
    <property type="evidence" value="ECO:0007669"/>
    <property type="project" value="TreeGrafter"/>
</dbReference>
<dbReference type="GO" id="GO:0052908">
    <property type="term" value="F:16S rRNA (adenine(1518)-N(6)/adenine(1519)-N(6))-dimethyltransferase activity"/>
    <property type="evidence" value="ECO:0007669"/>
    <property type="project" value="UniProtKB-EC"/>
</dbReference>
<dbReference type="GO" id="GO:0003723">
    <property type="term" value="F:RNA binding"/>
    <property type="evidence" value="ECO:0007669"/>
    <property type="project" value="UniProtKB-KW"/>
</dbReference>
<dbReference type="Gene3D" id="1.10.8.100">
    <property type="entry name" value="Ribosomal RNA adenine dimethylase-like, domain 2"/>
    <property type="match status" value="1"/>
</dbReference>
<dbReference type="Gene3D" id="3.40.50.150">
    <property type="entry name" value="Vaccinia Virus protein VP39"/>
    <property type="match status" value="1"/>
</dbReference>
<dbReference type="HAMAP" id="MF_00607">
    <property type="entry name" value="16SrRNA_methyltr_A"/>
    <property type="match status" value="1"/>
</dbReference>
<dbReference type="InterPro" id="IPR001737">
    <property type="entry name" value="KsgA/Erm"/>
</dbReference>
<dbReference type="InterPro" id="IPR023165">
    <property type="entry name" value="rRNA_Ade_diMease-like_C"/>
</dbReference>
<dbReference type="InterPro" id="IPR020596">
    <property type="entry name" value="rRNA_Ade_Mease_Trfase_CS"/>
</dbReference>
<dbReference type="InterPro" id="IPR020598">
    <property type="entry name" value="rRNA_Ade_methylase_Trfase_N"/>
</dbReference>
<dbReference type="InterPro" id="IPR011530">
    <property type="entry name" value="rRNA_adenine_dimethylase"/>
</dbReference>
<dbReference type="InterPro" id="IPR029063">
    <property type="entry name" value="SAM-dependent_MTases_sf"/>
</dbReference>
<dbReference type="NCBIfam" id="TIGR00755">
    <property type="entry name" value="ksgA"/>
    <property type="match status" value="1"/>
</dbReference>
<dbReference type="PANTHER" id="PTHR11727">
    <property type="entry name" value="DIMETHYLADENOSINE TRANSFERASE"/>
    <property type="match status" value="1"/>
</dbReference>
<dbReference type="PANTHER" id="PTHR11727:SF7">
    <property type="entry name" value="DIMETHYLADENOSINE TRANSFERASE-RELATED"/>
    <property type="match status" value="1"/>
</dbReference>
<dbReference type="Pfam" id="PF00398">
    <property type="entry name" value="RrnaAD"/>
    <property type="match status" value="1"/>
</dbReference>
<dbReference type="SMART" id="SM00650">
    <property type="entry name" value="rADc"/>
    <property type="match status" value="1"/>
</dbReference>
<dbReference type="SUPFAM" id="SSF53335">
    <property type="entry name" value="S-adenosyl-L-methionine-dependent methyltransferases"/>
    <property type="match status" value="1"/>
</dbReference>
<dbReference type="PROSITE" id="PS01131">
    <property type="entry name" value="RRNA_A_DIMETH"/>
    <property type="match status" value="1"/>
</dbReference>
<dbReference type="PROSITE" id="PS51689">
    <property type="entry name" value="SAM_RNA_A_N6_MT"/>
    <property type="match status" value="1"/>
</dbReference>
<protein>
    <recommendedName>
        <fullName evidence="1">Ribosomal RNA small subunit methyltransferase A</fullName>
        <ecNumber evidence="1">2.1.1.182</ecNumber>
    </recommendedName>
    <alternativeName>
        <fullName evidence="1">16S rRNA (adenine(1518)-N(6)/adenine(1519)-N(6))-dimethyltransferase</fullName>
    </alternativeName>
    <alternativeName>
        <fullName evidence="1">16S rRNA dimethyladenosine transferase</fullName>
    </alternativeName>
    <alternativeName>
        <fullName evidence="1">16S rRNA dimethylase</fullName>
    </alternativeName>
    <alternativeName>
        <fullName evidence="1">S-adenosylmethionine-6-N', N'-adenosyl(rRNA) dimethyltransferase</fullName>
    </alternativeName>
</protein>
<keyword id="KW-0963">Cytoplasm</keyword>
<keyword id="KW-0489">Methyltransferase</keyword>
<keyword id="KW-1185">Reference proteome</keyword>
<keyword id="KW-0694">RNA-binding</keyword>
<keyword id="KW-0698">rRNA processing</keyword>
<keyword id="KW-0949">S-adenosyl-L-methionine</keyword>
<keyword id="KW-0808">Transferase</keyword>
<evidence type="ECO:0000255" key="1">
    <source>
        <dbReference type="HAMAP-Rule" id="MF_00607"/>
    </source>
</evidence>
<feature type="chain" id="PRO_1000056683" description="Ribosomal RNA small subunit methyltransferase A">
    <location>
        <begin position="1"/>
        <end position="280"/>
    </location>
</feature>
<feature type="binding site" evidence="1">
    <location>
        <position position="15"/>
    </location>
    <ligand>
        <name>S-adenosyl-L-methionine</name>
        <dbReference type="ChEBI" id="CHEBI:59789"/>
    </ligand>
</feature>
<feature type="binding site" evidence="1">
    <location>
        <position position="17"/>
    </location>
    <ligand>
        <name>S-adenosyl-L-methionine</name>
        <dbReference type="ChEBI" id="CHEBI:59789"/>
    </ligand>
</feature>
<feature type="binding site" evidence="1">
    <location>
        <position position="42"/>
    </location>
    <ligand>
        <name>S-adenosyl-L-methionine</name>
        <dbReference type="ChEBI" id="CHEBI:59789"/>
    </ligand>
</feature>
<feature type="binding site" evidence="1">
    <location>
        <position position="64"/>
    </location>
    <ligand>
        <name>S-adenosyl-L-methionine</name>
        <dbReference type="ChEBI" id="CHEBI:59789"/>
    </ligand>
</feature>
<feature type="binding site" evidence="1">
    <location>
        <position position="89"/>
    </location>
    <ligand>
        <name>S-adenosyl-L-methionine</name>
        <dbReference type="ChEBI" id="CHEBI:59789"/>
    </ligand>
</feature>
<feature type="binding site" evidence="1">
    <location>
        <position position="109"/>
    </location>
    <ligand>
        <name>S-adenosyl-L-methionine</name>
        <dbReference type="ChEBI" id="CHEBI:59789"/>
    </ligand>
</feature>
<sequence length="280" mass="31073">MSFGGHTPRKRFGQHWLRDERVLDRILDASDLGDDDRVLEVGPGRGALTERLLASSAAAVHAVELDRDLVAGLQDRFGDSPRFSLREGDVLAVPLTLPDGQRATKVVANIPYNITGPLLERLIGRLDQPVDPPYQRLVLLVQKEVAERIRARPGASSFSALSVRMQLLAKCSSVCPVPPRCFQPPPKVHSEVIRLDPLPLEQRPDPVICRRVERLLKQAFLARRKMLRNTLTVSQPLSELETITQQAGIDLRQRPQEVAPHAWVELARGLNQADSAASSL</sequence>
<accession>A5GLH7</accession>
<comment type="function">
    <text evidence="1">Specifically dimethylates two adjacent adenosines (A1518 and A1519) in the loop of a conserved hairpin near the 3'-end of 16S rRNA in the 30S particle. May play a critical role in biogenesis of 30S subunits.</text>
</comment>
<comment type="catalytic activity">
    <reaction evidence="1">
        <text>adenosine(1518)/adenosine(1519) in 16S rRNA + 4 S-adenosyl-L-methionine = N(6)-dimethyladenosine(1518)/N(6)-dimethyladenosine(1519) in 16S rRNA + 4 S-adenosyl-L-homocysteine + 4 H(+)</text>
        <dbReference type="Rhea" id="RHEA:19609"/>
        <dbReference type="Rhea" id="RHEA-COMP:10232"/>
        <dbReference type="Rhea" id="RHEA-COMP:10233"/>
        <dbReference type="ChEBI" id="CHEBI:15378"/>
        <dbReference type="ChEBI" id="CHEBI:57856"/>
        <dbReference type="ChEBI" id="CHEBI:59789"/>
        <dbReference type="ChEBI" id="CHEBI:74411"/>
        <dbReference type="ChEBI" id="CHEBI:74493"/>
        <dbReference type="EC" id="2.1.1.182"/>
    </reaction>
</comment>
<comment type="subcellular location">
    <subcellularLocation>
        <location evidence="1">Cytoplasm</location>
    </subcellularLocation>
</comment>
<comment type="similarity">
    <text evidence="1">Belongs to the class I-like SAM-binding methyltransferase superfamily. rRNA adenine N(6)-methyltransferase family. RsmA subfamily.</text>
</comment>
<organism>
    <name type="scientific">Synechococcus sp. (strain WH7803)</name>
    <dbReference type="NCBI Taxonomy" id="32051"/>
    <lineage>
        <taxon>Bacteria</taxon>
        <taxon>Bacillati</taxon>
        <taxon>Cyanobacteriota</taxon>
        <taxon>Cyanophyceae</taxon>
        <taxon>Synechococcales</taxon>
        <taxon>Synechococcaceae</taxon>
        <taxon>Synechococcus</taxon>
    </lineage>
</organism>
<proteinExistence type="inferred from homology"/>
<reference key="1">
    <citation type="submission" date="2006-05" db="EMBL/GenBank/DDBJ databases">
        <authorList>
            <consortium name="Genoscope"/>
        </authorList>
    </citation>
    <scope>NUCLEOTIDE SEQUENCE [LARGE SCALE GENOMIC DNA]</scope>
    <source>
        <strain>WH7803</strain>
    </source>
</reference>
<gene>
    <name evidence="1" type="primary">rsmA</name>
    <name evidence="1" type="synonym">ksgA</name>
    <name type="ordered locus">SynWH7803_1366</name>
</gene>